<organism>
    <name type="scientific">Shewanella woodyi (strain ATCC 51908 / MS32)</name>
    <dbReference type="NCBI Taxonomy" id="392500"/>
    <lineage>
        <taxon>Bacteria</taxon>
        <taxon>Pseudomonadati</taxon>
        <taxon>Pseudomonadota</taxon>
        <taxon>Gammaproteobacteria</taxon>
        <taxon>Alteromonadales</taxon>
        <taxon>Shewanellaceae</taxon>
        <taxon>Shewanella</taxon>
    </lineage>
</organism>
<feature type="chain" id="PRO_1000196804" description="Bifunctional protein FolD">
    <location>
        <begin position="1"/>
        <end position="286"/>
    </location>
</feature>
<feature type="binding site" evidence="1">
    <location>
        <begin position="166"/>
        <end position="168"/>
    </location>
    <ligand>
        <name>NADP(+)</name>
        <dbReference type="ChEBI" id="CHEBI:58349"/>
    </ligand>
</feature>
<feature type="binding site" evidence="1">
    <location>
        <position position="232"/>
    </location>
    <ligand>
        <name>NADP(+)</name>
        <dbReference type="ChEBI" id="CHEBI:58349"/>
    </ligand>
</feature>
<evidence type="ECO:0000255" key="1">
    <source>
        <dbReference type="HAMAP-Rule" id="MF_01576"/>
    </source>
</evidence>
<protein>
    <recommendedName>
        <fullName evidence="1">Bifunctional protein FolD</fullName>
    </recommendedName>
    <domain>
        <recommendedName>
            <fullName evidence="1">Methylenetetrahydrofolate dehydrogenase</fullName>
            <ecNumber evidence="1">1.5.1.5</ecNumber>
        </recommendedName>
    </domain>
    <domain>
        <recommendedName>
            <fullName evidence="1">Methenyltetrahydrofolate cyclohydrolase</fullName>
            <ecNumber evidence="1">3.5.4.9</ecNumber>
        </recommendedName>
    </domain>
</protein>
<comment type="function">
    <text evidence="1">Catalyzes the oxidation of 5,10-methylenetetrahydrofolate to 5,10-methenyltetrahydrofolate and then the hydrolysis of 5,10-methenyltetrahydrofolate to 10-formyltetrahydrofolate.</text>
</comment>
<comment type="catalytic activity">
    <reaction evidence="1">
        <text>(6R)-5,10-methylene-5,6,7,8-tetrahydrofolate + NADP(+) = (6R)-5,10-methenyltetrahydrofolate + NADPH</text>
        <dbReference type="Rhea" id="RHEA:22812"/>
        <dbReference type="ChEBI" id="CHEBI:15636"/>
        <dbReference type="ChEBI" id="CHEBI:57455"/>
        <dbReference type="ChEBI" id="CHEBI:57783"/>
        <dbReference type="ChEBI" id="CHEBI:58349"/>
        <dbReference type="EC" id="1.5.1.5"/>
    </reaction>
</comment>
<comment type="catalytic activity">
    <reaction evidence="1">
        <text>(6R)-5,10-methenyltetrahydrofolate + H2O = (6R)-10-formyltetrahydrofolate + H(+)</text>
        <dbReference type="Rhea" id="RHEA:23700"/>
        <dbReference type="ChEBI" id="CHEBI:15377"/>
        <dbReference type="ChEBI" id="CHEBI:15378"/>
        <dbReference type="ChEBI" id="CHEBI:57455"/>
        <dbReference type="ChEBI" id="CHEBI:195366"/>
        <dbReference type="EC" id="3.5.4.9"/>
    </reaction>
</comment>
<comment type="pathway">
    <text evidence="1">One-carbon metabolism; tetrahydrofolate interconversion.</text>
</comment>
<comment type="subunit">
    <text evidence="1">Homodimer.</text>
</comment>
<comment type="similarity">
    <text evidence="1">Belongs to the tetrahydrofolate dehydrogenase/cyclohydrolase family.</text>
</comment>
<gene>
    <name evidence="1" type="primary">folD</name>
    <name type="ordered locus">Swoo_3115</name>
</gene>
<reference key="1">
    <citation type="submission" date="2008-02" db="EMBL/GenBank/DDBJ databases">
        <title>Complete sequence of Shewanella woodyi ATCC 51908.</title>
        <authorList>
            <consortium name="US DOE Joint Genome Institute"/>
            <person name="Copeland A."/>
            <person name="Lucas S."/>
            <person name="Lapidus A."/>
            <person name="Glavina del Rio T."/>
            <person name="Dalin E."/>
            <person name="Tice H."/>
            <person name="Bruce D."/>
            <person name="Goodwin L."/>
            <person name="Pitluck S."/>
            <person name="Sims D."/>
            <person name="Brettin T."/>
            <person name="Detter J.C."/>
            <person name="Han C."/>
            <person name="Kuske C.R."/>
            <person name="Schmutz J."/>
            <person name="Larimer F."/>
            <person name="Land M."/>
            <person name="Hauser L."/>
            <person name="Kyrpides N."/>
            <person name="Lykidis A."/>
            <person name="Zhao J.-S."/>
            <person name="Richardson P."/>
        </authorList>
    </citation>
    <scope>NUCLEOTIDE SEQUENCE [LARGE SCALE GENOMIC DNA]</scope>
    <source>
        <strain>ATCC 51908 / MS32</strain>
    </source>
</reference>
<proteinExistence type="inferred from homology"/>
<dbReference type="EC" id="1.5.1.5" evidence="1"/>
<dbReference type="EC" id="3.5.4.9" evidence="1"/>
<dbReference type="EMBL" id="CP000961">
    <property type="protein sequence ID" value="ACA87386.1"/>
    <property type="molecule type" value="Genomic_DNA"/>
</dbReference>
<dbReference type="RefSeq" id="WP_012325722.1">
    <property type="nucleotide sequence ID" value="NC_010506.1"/>
</dbReference>
<dbReference type="SMR" id="B1KLT9"/>
<dbReference type="STRING" id="392500.Swoo_3115"/>
<dbReference type="KEGG" id="swd:Swoo_3115"/>
<dbReference type="eggNOG" id="COG0190">
    <property type="taxonomic scope" value="Bacteria"/>
</dbReference>
<dbReference type="HOGENOM" id="CLU_034045_2_1_6"/>
<dbReference type="UniPathway" id="UPA00193"/>
<dbReference type="Proteomes" id="UP000002168">
    <property type="component" value="Chromosome"/>
</dbReference>
<dbReference type="GO" id="GO:0005829">
    <property type="term" value="C:cytosol"/>
    <property type="evidence" value="ECO:0007669"/>
    <property type="project" value="TreeGrafter"/>
</dbReference>
<dbReference type="GO" id="GO:0004477">
    <property type="term" value="F:methenyltetrahydrofolate cyclohydrolase activity"/>
    <property type="evidence" value="ECO:0007669"/>
    <property type="project" value="UniProtKB-UniRule"/>
</dbReference>
<dbReference type="GO" id="GO:0004488">
    <property type="term" value="F:methylenetetrahydrofolate dehydrogenase (NADP+) activity"/>
    <property type="evidence" value="ECO:0007669"/>
    <property type="project" value="UniProtKB-UniRule"/>
</dbReference>
<dbReference type="GO" id="GO:0000105">
    <property type="term" value="P:L-histidine biosynthetic process"/>
    <property type="evidence" value="ECO:0007669"/>
    <property type="project" value="UniProtKB-KW"/>
</dbReference>
<dbReference type="GO" id="GO:0009086">
    <property type="term" value="P:methionine biosynthetic process"/>
    <property type="evidence" value="ECO:0007669"/>
    <property type="project" value="UniProtKB-KW"/>
</dbReference>
<dbReference type="GO" id="GO:0006164">
    <property type="term" value="P:purine nucleotide biosynthetic process"/>
    <property type="evidence" value="ECO:0007669"/>
    <property type="project" value="UniProtKB-KW"/>
</dbReference>
<dbReference type="GO" id="GO:0035999">
    <property type="term" value="P:tetrahydrofolate interconversion"/>
    <property type="evidence" value="ECO:0007669"/>
    <property type="project" value="UniProtKB-UniRule"/>
</dbReference>
<dbReference type="CDD" id="cd01080">
    <property type="entry name" value="NAD_bind_m-THF_DH_Cyclohyd"/>
    <property type="match status" value="1"/>
</dbReference>
<dbReference type="FunFam" id="3.40.50.10860:FF:000001">
    <property type="entry name" value="Bifunctional protein FolD"/>
    <property type="match status" value="1"/>
</dbReference>
<dbReference type="FunFam" id="3.40.50.720:FF:000006">
    <property type="entry name" value="Bifunctional protein FolD"/>
    <property type="match status" value="1"/>
</dbReference>
<dbReference type="Gene3D" id="3.40.50.10860">
    <property type="entry name" value="Leucine Dehydrogenase, chain A, domain 1"/>
    <property type="match status" value="1"/>
</dbReference>
<dbReference type="Gene3D" id="3.40.50.720">
    <property type="entry name" value="NAD(P)-binding Rossmann-like Domain"/>
    <property type="match status" value="1"/>
</dbReference>
<dbReference type="HAMAP" id="MF_01576">
    <property type="entry name" value="THF_DHG_CYH"/>
    <property type="match status" value="1"/>
</dbReference>
<dbReference type="InterPro" id="IPR046346">
    <property type="entry name" value="Aminoacid_DH-like_N_sf"/>
</dbReference>
<dbReference type="InterPro" id="IPR036291">
    <property type="entry name" value="NAD(P)-bd_dom_sf"/>
</dbReference>
<dbReference type="InterPro" id="IPR000672">
    <property type="entry name" value="THF_DH/CycHdrlase"/>
</dbReference>
<dbReference type="InterPro" id="IPR020630">
    <property type="entry name" value="THF_DH/CycHdrlase_cat_dom"/>
</dbReference>
<dbReference type="InterPro" id="IPR020867">
    <property type="entry name" value="THF_DH/CycHdrlase_CS"/>
</dbReference>
<dbReference type="InterPro" id="IPR020631">
    <property type="entry name" value="THF_DH/CycHdrlase_NAD-bd_dom"/>
</dbReference>
<dbReference type="NCBIfam" id="NF008058">
    <property type="entry name" value="PRK10792.1"/>
    <property type="match status" value="1"/>
</dbReference>
<dbReference type="NCBIfam" id="NF010783">
    <property type="entry name" value="PRK14186.1"/>
    <property type="match status" value="1"/>
</dbReference>
<dbReference type="PANTHER" id="PTHR48099:SF5">
    <property type="entry name" value="C-1-TETRAHYDROFOLATE SYNTHASE, CYTOPLASMIC"/>
    <property type="match status" value="1"/>
</dbReference>
<dbReference type="PANTHER" id="PTHR48099">
    <property type="entry name" value="C-1-TETRAHYDROFOLATE SYNTHASE, CYTOPLASMIC-RELATED"/>
    <property type="match status" value="1"/>
</dbReference>
<dbReference type="Pfam" id="PF00763">
    <property type="entry name" value="THF_DHG_CYH"/>
    <property type="match status" value="1"/>
</dbReference>
<dbReference type="Pfam" id="PF02882">
    <property type="entry name" value="THF_DHG_CYH_C"/>
    <property type="match status" value="1"/>
</dbReference>
<dbReference type="PRINTS" id="PR00085">
    <property type="entry name" value="THFDHDRGNASE"/>
</dbReference>
<dbReference type="SUPFAM" id="SSF53223">
    <property type="entry name" value="Aminoacid dehydrogenase-like, N-terminal domain"/>
    <property type="match status" value="1"/>
</dbReference>
<dbReference type="SUPFAM" id="SSF51735">
    <property type="entry name" value="NAD(P)-binding Rossmann-fold domains"/>
    <property type="match status" value="1"/>
</dbReference>
<dbReference type="PROSITE" id="PS00767">
    <property type="entry name" value="THF_DHG_CYH_2"/>
    <property type="match status" value="1"/>
</dbReference>
<accession>B1KLT9</accession>
<sequence length="286" mass="30820">MTAQTIDGKAIAQSIRTQLKEKVTARKEAGKRVPGLAVILVGADPASQVYVGSKRRACEEVGFLSRSYDLESSTTEEQLLSLIDECNQDPAIDGILVQLPLPEHIEESKVIERIRPDKDVDGFHPYNVGRLAQRIPVLRSCTPMGIMTLIKSTGVDTYGLDALVVGASNIVGRPMSLELLLAGCTTTTCHRFTRNLEQKVRQADLVVVAVGKPGFIPGEWIKPGALVIDVGINRLEDGSLVGDVQYDVAAQNASFITPVPGGVGPMTIASLLENTLYAAEQYHDEA</sequence>
<name>FOLD_SHEWM</name>
<keyword id="KW-0028">Amino-acid biosynthesis</keyword>
<keyword id="KW-0368">Histidine biosynthesis</keyword>
<keyword id="KW-0378">Hydrolase</keyword>
<keyword id="KW-0486">Methionine biosynthesis</keyword>
<keyword id="KW-0511">Multifunctional enzyme</keyword>
<keyword id="KW-0521">NADP</keyword>
<keyword id="KW-0554">One-carbon metabolism</keyword>
<keyword id="KW-0560">Oxidoreductase</keyword>
<keyword id="KW-0658">Purine biosynthesis</keyword>
<keyword id="KW-1185">Reference proteome</keyword>